<proteinExistence type="inferred from homology"/>
<feature type="chain" id="PRO_1000066182" description="Protein-methionine-sulfoxide reductase heme-binding subunit MsrQ">
    <location>
        <begin position="1"/>
        <end position="203"/>
    </location>
</feature>
<feature type="transmembrane region" description="Helical" evidence="1">
    <location>
        <begin position="10"/>
        <end position="30"/>
    </location>
</feature>
<feature type="transmembrane region" description="Helical" evidence="1">
    <location>
        <begin position="37"/>
        <end position="57"/>
    </location>
</feature>
<feature type="transmembrane region" description="Helical" evidence="1">
    <location>
        <begin position="75"/>
        <end position="95"/>
    </location>
</feature>
<feature type="transmembrane region" description="Helical" evidence="1">
    <location>
        <begin position="110"/>
        <end position="130"/>
    </location>
</feature>
<feature type="transmembrane region" description="Helical" evidence="1">
    <location>
        <begin position="147"/>
        <end position="167"/>
    </location>
</feature>
<feature type="transmembrane region" description="Helical" evidence="1">
    <location>
        <begin position="169"/>
        <end position="189"/>
    </location>
</feature>
<gene>
    <name evidence="1" type="primary">msrQ</name>
    <name type="ordered locus">PSEEN4706</name>
</gene>
<organism>
    <name type="scientific">Pseudomonas entomophila (strain L48)</name>
    <dbReference type="NCBI Taxonomy" id="384676"/>
    <lineage>
        <taxon>Bacteria</taxon>
        <taxon>Pseudomonadati</taxon>
        <taxon>Pseudomonadota</taxon>
        <taxon>Gammaproteobacteria</taxon>
        <taxon>Pseudomonadales</taxon>
        <taxon>Pseudomonadaceae</taxon>
        <taxon>Pseudomonas</taxon>
    </lineage>
</organism>
<reference key="1">
    <citation type="journal article" date="2006" name="Nat. Biotechnol.">
        <title>Complete genome sequence of the entomopathogenic and metabolically versatile soil bacterium Pseudomonas entomophila.</title>
        <authorList>
            <person name="Vodovar N."/>
            <person name="Vallenet D."/>
            <person name="Cruveiller S."/>
            <person name="Rouy Z."/>
            <person name="Barbe V."/>
            <person name="Acosta C."/>
            <person name="Cattolico L."/>
            <person name="Jubin C."/>
            <person name="Lajus A."/>
            <person name="Segurens B."/>
            <person name="Vacherie B."/>
            <person name="Wincker P."/>
            <person name="Weissenbach J."/>
            <person name="Lemaitre B."/>
            <person name="Medigue C."/>
            <person name="Boccard F."/>
        </authorList>
    </citation>
    <scope>NUCLEOTIDE SEQUENCE [LARGE SCALE GENOMIC DNA]</scope>
    <source>
        <strain>L48</strain>
    </source>
</reference>
<evidence type="ECO:0000255" key="1">
    <source>
        <dbReference type="HAMAP-Rule" id="MF_01207"/>
    </source>
</evidence>
<comment type="function">
    <text evidence="1">Part of the MsrPQ system that repairs oxidized periplasmic proteins containing methionine sulfoxide residues (Met-O), using respiratory chain electrons. Thus protects these proteins from oxidative-stress damage caused by reactive species of oxygen and chlorine generated by the host defense mechanisms. MsrPQ is essential for the maintenance of envelope integrity under bleach stress, rescuing a wide series of structurally unrelated periplasmic proteins from methionine oxidation. MsrQ provides electrons for reduction to the reductase catalytic subunit MsrP, using the quinone pool of the respiratory chain.</text>
</comment>
<comment type="cofactor">
    <cofactor evidence="1">
        <name>FMN</name>
        <dbReference type="ChEBI" id="CHEBI:58210"/>
    </cofactor>
    <text evidence="1">Binds 1 FMN per subunit.</text>
</comment>
<comment type="cofactor">
    <cofactor evidence="1">
        <name>heme b</name>
        <dbReference type="ChEBI" id="CHEBI:60344"/>
    </cofactor>
    <text evidence="1">Binds 1 heme b (iron(II)-protoporphyrin IX) group per subunit.</text>
</comment>
<comment type="subunit">
    <text evidence="1">Heterodimer of a catalytic subunit (MsrP) and a heme-binding subunit (MsrQ).</text>
</comment>
<comment type="subcellular location">
    <subcellularLocation>
        <location evidence="1">Cell inner membrane</location>
        <topology evidence="1">Multi-pass membrane protein</topology>
    </subcellularLocation>
</comment>
<comment type="similarity">
    <text evidence="1">Belongs to the MsrQ family.</text>
</comment>
<keyword id="KW-0997">Cell inner membrane</keyword>
<keyword id="KW-1003">Cell membrane</keyword>
<keyword id="KW-0249">Electron transport</keyword>
<keyword id="KW-0285">Flavoprotein</keyword>
<keyword id="KW-0288">FMN</keyword>
<keyword id="KW-0349">Heme</keyword>
<keyword id="KW-0408">Iron</keyword>
<keyword id="KW-0472">Membrane</keyword>
<keyword id="KW-0479">Metal-binding</keyword>
<keyword id="KW-0812">Transmembrane</keyword>
<keyword id="KW-1133">Transmembrane helix</keyword>
<keyword id="KW-0813">Transport</keyword>
<dbReference type="EMBL" id="CT573326">
    <property type="protein sequence ID" value="CAK17368.1"/>
    <property type="molecule type" value="Genomic_DNA"/>
</dbReference>
<dbReference type="RefSeq" id="WP_011535732.1">
    <property type="nucleotide sequence ID" value="NC_008027.1"/>
</dbReference>
<dbReference type="SMR" id="Q1I4R8"/>
<dbReference type="STRING" id="384676.PSEEN4706"/>
<dbReference type="GeneID" id="32807674"/>
<dbReference type="KEGG" id="pen:PSEEN4706"/>
<dbReference type="eggNOG" id="COG2717">
    <property type="taxonomic scope" value="Bacteria"/>
</dbReference>
<dbReference type="HOGENOM" id="CLU_080662_0_1_6"/>
<dbReference type="OrthoDB" id="9788328at2"/>
<dbReference type="Proteomes" id="UP000000658">
    <property type="component" value="Chromosome"/>
</dbReference>
<dbReference type="GO" id="GO:0005886">
    <property type="term" value="C:plasma membrane"/>
    <property type="evidence" value="ECO:0007669"/>
    <property type="project" value="UniProtKB-SubCell"/>
</dbReference>
<dbReference type="GO" id="GO:0009055">
    <property type="term" value="F:electron transfer activity"/>
    <property type="evidence" value="ECO:0007669"/>
    <property type="project" value="UniProtKB-UniRule"/>
</dbReference>
<dbReference type="GO" id="GO:0010181">
    <property type="term" value="F:FMN binding"/>
    <property type="evidence" value="ECO:0007669"/>
    <property type="project" value="UniProtKB-UniRule"/>
</dbReference>
<dbReference type="GO" id="GO:0020037">
    <property type="term" value="F:heme binding"/>
    <property type="evidence" value="ECO:0007669"/>
    <property type="project" value="UniProtKB-UniRule"/>
</dbReference>
<dbReference type="GO" id="GO:0046872">
    <property type="term" value="F:metal ion binding"/>
    <property type="evidence" value="ECO:0007669"/>
    <property type="project" value="UniProtKB-KW"/>
</dbReference>
<dbReference type="GO" id="GO:0016679">
    <property type="term" value="F:oxidoreductase activity, acting on diphenols and related substances as donors"/>
    <property type="evidence" value="ECO:0007669"/>
    <property type="project" value="TreeGrafter"/>
</dbReference>
<dbReference type="GO" id="GO:0030091">
    <property type="term" value="P:protein repair"/>
    <property type="evidence" value="ECO:0007669"/>
    <property type="project" value="UniProtKB-UniRule"/>
</dbReference>
<dbReference type="HAMAP" id="MF_01207">
    <property type="entry name" value="MsrQ"/>
    <property type="match status" value="1"/>
</dbReference>
<dbReference type="InterPro" id="IPR013130">
    <property type="entry name" value="Fe3_Rdtase_TM_dom"/>
</dbReference>
<dbReference type="InterPro" id="IPR022837">
    <property type="entry name" value="MsrQ-like"/>
</dbReference>
<dbReference type="NCBIfam" id="NF003831">
    <property type="entry name" value="PRK05419.1-2"/>
    <property type="match status" value="1"/>
</dbReference>
<dbReference type="PANTHER" id="PTHR36964">
    <property type="entry name" value="PROTEIN-METHIONINE-SULFOXIDE REDUCTASE HEME-BINDING SUBUNIT MSRQ"/>
    <property type="match status" value="1"/>
</dbReference>
<dbReference type="PANTHER" id="PTHR36964:SF1">
    <property type="entry name" value="PROTEIN-METHIONINE-SULFOXIDE REDUCTASE HEME-BINDING SUBUNIT MSRQ"/>
    <property type="match status" value="1"/>
</dbReference>
<dbReference type="Pfam" id="PF01794">
    <property type="entry name" value="Ferric_reduct"/>
    <property type="match status" value="1"/>
</dbReference>
<sequence length="203" mass="23282">MRYPWFRLAIFVLGCLFPLWWFYEAAMGLLGPDPGKIMMDRLGLGALVFLLITLSMTPLQRLTGWSGWIVVRRQLGLWCFAYIVLHLVSYLVFILGLDWGQFGVELRKRPYIIVGALGFLGLLALAVTSNRYSQRRLGARWKKLHRLVYVILGLGLLHFLWIVRSDLKEWAIYAGIGGVLLVMRIPPVWRRVPRLMGGRGRAA</sequence>
<protein>
    <recommendedName>
        <fullName evidence="1">Protein-methionine-sulfoxide reductase heme-binding subunit MsrQ</fullName>
    </recommendedName>
    <alternativeName>
        <fullName evidence="1">Flavocytochrome MsrQ</fullName>
    </alternativeName>
</protein>
<accession>Q1I4R8</accession>
<name>MSRQ_PSEE4</name>